<evidence type="ECO:0000255" key="1">
    <source>
        <dbReference type="PROSITE-ProRule" id="PRU00602"/>
    </source>
</evidence>
<evidence type="ECO:0000269" key="2">
    <source>
    </source>
</evidence>
<evidence type="ECO:0000269" key="3">
    <source>
    </source>
</evidence>
<evidence type="ECO:0000269" key="4">
    <source>
    </source>
</evidence>
<evidence type="ECO:0000269" key="5">
    <source>
    </source>
</evidence>
<evidence type="ECO:0000269" key="6">
    <source>
    </source>
</evidence>
<evidence type="ECO:0000269" key="7">
    <source>
    </source>
</evidence>
<evidence type="ECO:0000269" key="8">
    <source>
    </source>
</evidence>
<evidence type="ECO:0000269" key="9">
    <source>
    </source>
</evidence>
<evidence type="ECO:0000305" key="10"/>
<evidence type="ECO:0000305" key="11">
    <source>
    </source>
</evidence>
<evidence type="ECO:0007744" key="12">
    <source>
        <dbReference type="PDB" id="8F2R"/>
    </source>
</evidence>
<evidence type="ECO:0007744" key="13">
    <source>
        <dbReference type="PDB" id="8F2U"/>
    </source>
</evidence>
<evidence type="ECO:0007744" key="14">
    <source>
        <dbReference type="PDB" id="8P0W"/>
    </source>
</evidence>
<evidence type="ECO:0007744" key="15">
    <source>
    </source>
</evidence>
<evidence type="ECO:0007829" key="16">
    <source>
        <dbReference type="PDB" id="8F2R"/>
    </source>
</evidence>
<evidence type="ECO:0007829" key="17">
    <source>
        <dbReference type="PDB" id="8P0W"/>
    </source>
</evidence>
<keyword id="KW-0002">3D-structure</keyword>
<keyword id="KW-0007">Acetylation</keyword>
<keyword id="KW-0025">Alternative splicing</keyword>
<keyword id="KW-0963">Cytoplasm</keyword>
<keyword id="KW-0539">Nucleus</keyword>
<keyword id="KW-1267">Proteomics identification</keyword>
<keyword id="KW-1185">Reference proteome</keyword>
<keyword id="KW-0804">Transcription</keyword>
<keyword id="KW-0805">Transcription regulation</keyword>
<keyword id="KW-0833">Ubl conjugation pathway</keyword>
<proteinExistence type="evidence at protein level"/>
<organism>
    <name type="scientific">Homo sapiens</name>
    <name type="common">Human</name>
    <dbReference type="NCBI Taxonomy" id="9606"/>
    <lineage>
        <taxon>Eukaryota</taxon>
        <taxon>Metazoa</taxon>
        <taxon>Chordata</taxon>
        <taxon>Craniata</taxon>
        <taxon>Vertebrata</taxon>
        <taxon>Euteleostomi</taxon>
        <taxon>Mammalia</taxon>
        <taxon>Eutheria</taxon>
        <taxon>Euarchontoglires</taxon>
        <taxon>Primates</taxon>
        <taxon>Haplorrhini</taxon>
        <taxon>Catarrhini</taxon>
        <taxon>Hominidae</taxon>
        <taxon>Homo</taxon>
    </lineage>
</organism>
<dbReference type="EMBL" id="AY542161">
    <property type="protein sequence ID" value="AAS22243.1"/>
    <property type="molecule type" value="mRNA"/>
</dbReference>
<dbReference type="EMBL" id="AF169971">
    <property type="protein sequence ID" value="AAQ13599.1"/>
    <property type="molecule type" value="mRNA"/>
</dbReference>
<dbReference type="EMBL" id="AL137244">
    <property type="status" value="NOT_ANNOTATED_CDS"/>
    <property type="molecule type" value="Genomic_DNA"/>
</dbReference>
<dbReference type="EMBL" id="BC117391">
    <property type="protein sequence ID" value="AAI17392.1"/>
    <property type="molecule type" value="mRNA"/>
</dbReference>
<dbReference type="EMBL" id="BC143912">
    <property type="protein sequence ID" value="AAI43913.1"/>
    <property type="molecule type" value="mRNA"/>
</dbReference>
<dbReference type="EMBL" id="BC171758">
    <property type="protein sequence ID" value="AAI71758.1"/>
    <property type="molecule type" value="mRNA"/>
</dbReference>
<dbReference type="CCDS" id="CCDS9451.1">
    <molecule id="Q7Z4G1-1"/>
</dbReference>
<dbReference type="CCDS" id="CCDS9452.1">
    <molecule id="Q7Z4G1-2"/>
</dbReference>
<dbReference type="RefSeq" id="NP_987091.1">
    <molecule id="Q7Z4G1-1"/>
    <property type="nucleotide sequence ID" value="NM_203495.4"/>
</dbReference>
<dbReference type="RefSeq" id="NP_987093.1">
    <molecule id="Q7Z4G1-2"/>
    <property type="nucleotide sequence ID" value="NM_203497.4"/>
</dbReference>
<dbReference type="PDB" id="8F2R">
    <property type="method" value="EM"/>
    <property type="resolution" value="3.12 A"/>
    <property type="chains" value="F=9-85"/>
</dbReference>
<dbReference type="PDB" id="8F2U">
    <property type="method" value="EM"/>
    <property type="resolution" value="3.53 A"/>
    <property type="chains" value="F=1-85"/>
</dbReference>
<dbReference type="PDB" id="8P0W">
    <property type="method" value="EM"/>
    <property type="resolution" value="2.90 A"/>
    <property type="chains" value="F=1-85"/>
</dbReference>
<dbReference type="PDBsum" id="8F2R"/>
<dbReference type="PDBsum" id="8F2U"/>
<dbReference type="PDBsum" id="8P0W"/>
<dbReference type="EMDB" id="EMD-17340"/>
<dbReference type="EMDB" id="EMD-17342"/>
<dbReference type="EMDB" id="EMD-28825"/>
<dbReference type="EMDB" id="EMD-28827"/>
<dbReference type="SMR" id="Q7Z4G1"/>
<dbReference type="BioGRID" id="128071">
    <property type="interactions" value="61"/>
</dbReference>
<dbReference type="ComplexPortal" id="CPX-2211">
    <property type="entry name" value="Commander complex"/>
</dbReference>
<dbReference type="CORUM" id="Q7Z4G1"/>
<dbReference type="FunCoup" id="Q7Z4G1">
    <property type="interactions" value="396"/>
</dbReference>
<dbReference type="IntAct" id="Q7Z4G1">
    <property type="interactions" value="54"/>
</dbReference>
<dbReference type="STRING" id="9606.ENSP00000348054"/>
<dbReference type="GlyGen" id="Q7Z4G1">
    <property type="glycosylation" value="1 site, 1 O-linked glycan (1 site)"/>
</dbReference>
<dbReference type="iPTMnet" id="Q7Z4G1"/>
<dbReference type="MetOSite" id="Q7Z4G1"/>
<dbReference type="PhosphoSitePlus" id="Q7Z4G1"/>
<dbReference type="BioMuta" id="COMMD6"/>
<dbReference type="DMDM" id="51315937"/>
<dbReference type="jPOST" id="Q7Z4G1"/>
<dbReference type="MassIVE" id="Q7Z4G1"/>
<dbReference type="PeptideAtlas" id="Q7Z4G1"/>
<dbReference type="ProteomicsDB" id="69174">
    <molecule id="Q7Z4G1-1"/>
</dbReference>
<dbReference type="ProteomicsDB" id="69175">
    <molecule id="Q7Z4G1-2"/>
</dbReference>
<dbReference type="Pumba" id="Q7Z4G1"/>
<dbReference type="Antibodypedia" id="71333">
    <property type="antibodies" value="27 antibodies from 6 providers"/>
</dbReference>
<dbReference type="DNASU" id="170622"/>
<dbReference type="Ensembl" id="ENST00000355801.4">
    <molecule id="Q7Z4G1-2"/>
    <property type="protein sequence ID" value="ENSP00000348054.4"/>
    <property type="gene ID" value="ENSG00000188243.14"/>
</dbReference>
<dbReference type="Ensembl" id="ENST00000377615.7">
    <molecule id="Q7Z4G1-1"/>
    <property type="protein sequence ID" value="ENSP00000366841.3"/>
    <property type="gene ID" value="ENSG00000188243.14"/>
</dbReference>
<dbReference type="Ensembl" id="ENST00000682242.1">
    <molecule id="Q7Z4G1-1"/>
    <property type="protein sequence ID" value="ENSP00000506987.1"/>
    <property type="gene ID" value="ENSG00000188243.14"/>
</dbReference>
<dbReference type="GeneID" id="170622"/>
<dbReference type="KEGG" id="hsa:170622"/>
<dbReference type="MANE-Select" id="ENST00000682242.1">
    <property type="protein sequence ID" value="ENSP00000506987.1"/>
    <property type="RefSeq nucleotide sequence ID" value="NM_203495.4"/>
    <property type="RefSeq protein sequence ID" value="NP_987091.1"/>
</dbReference>
<dbReference type="UCSC" id="uc001vjn.3">
    <molecule id="Q7Z4G1-1"/>
    <property type="organism name" value="human"/>
</dbReference>
<dbReference type="AGR" id="HGNC:24015"/>
<dbReference type="CTD" id="170622"/>
<dbReference type="DisGeNET" id="170622"/>
<dbReference type="GeneCards" id="COMMD6"/>
<dbReference type="HGNC" id="HGNC:24015">
    <property type="gene designation" value="COMMD6"/>
</dbReference>
<dbReference type="HPA" id="ENSG00000188243">
    <property type="expression patterns" value="Low tissue specificity"/>
</dbReference>
<dbReference type="MIM" id="612377">
    <property type="type" value="gene"/>
</dbReference>
<dbReference type="neXtProt" id="NX_Q7Z4G1"/>
<dbReference type="OpenTargets" id="ENSG00000188243"/>
<dbReference type="PharmGKB" id="PA134906013"/>
<dbReference type="VEuPathDB" id="HostDB:ENSG00000188243"/>
<dbReference type="GeneTree" id="ENSGT00390000018369"/>
<dbReference type="HOGENOM" id="CLU_139245_1_0_1"/>
<dbReference type="InParanoid" id="Q7Z4G1"/>
<dbReference type="OMA" id="KLVDFQW"/>
<dbReference type="OrthoDB" id="10251827at2759"/>
<dbReference type="PAN-GO" id="Q7Z4G1">
    <property type="GO annotations" value="2 GO annotations based on evolutionary models"/>
</dbReference>
<dbReference type="PhylomeDB" id="Q7Z4G1"/>
<dbReference type="PathwayCommons" id="Q7Z4G1"/>
<dbReference type="Reactome" id="R-HSA-8951664">
    <property type="pathway name" value="Neddylation"/>
</dbReference>
<dbReference type="SignaLink" id="Q7Z4G1"/>
<dbReference type="BioGRID-ORCS" id="170622">
    <property type="hits" value="26 hits in 1162 CRISPR screens"/>
</dbReference>
<dbReference type="ChiTaRS" id="COMMD6">
    <property type="organism name" value="human"/>
</dbReference>
<dbReference type="GenomeRNAi" id="170622"/>
<dbReference type="Pharos" id="Q7Z4G1">
    <property type="development level" value="Tbio"/>
</dbReference>
<dbReference type="PRO" id="PR:Q7Z4G1"/>
<dbReference type="Proteomes" id="UP000005640">
    <property type="component" value="Chromosome 13"/>
</dbReference>
<dbReference type="RNAct" id="Q7Z4G1">
    <property type="molecule type" value="protein"/>
</dbReference>
<dbReference type="Bgee" id="ENSG00000188243">
    <property type="expression patterns" value="Expressed in upper arm skin and 186 other cell types or tissues"/>
</dbReference>
<dbReference type="ExpressionAtlas" id="Q7Z4G1">
    <property type="expression patterns" value="baseline and differential"/>
</dbReference>
<dbReference type="GO" id="GO:0005737">
    <property type="term" value="C:cytoplasm"/>
    <property type="evidence" value="ECO:0007669"/>
    <property type="project" value="UniProtKB-SubCell"/>
</dbReference>
<dbReference type="GO" id="GO:0005634">
    <property type="term" value="C:nucleus"/>
    <property type="evidence" value="ECO:0007669"/>
    <property type="project" value="UniProtKB-SubCell"/>
</dbReference>
<dbReference type="GO" id="GO:0051059">
    <property type="term" value="F:NF-kappaB binding"/>
    <property type="evidence" value="ECO:0000353"/>
    <property type="project" value="MGI"/>
</dbReference>
<dbReference type="GO" id="GO:0032088">
    <property type="term" value="P:negative regulation of NF-kappaB transcription factor activity"/>
    <property type="evidence" value="ECO:0000314"/>
    <property type="project" value="MGI"/>
</dbReference>
<dbReference type="GO" id="GO:0007165">
    <property type="term" value="P:signal transduction"/>
    <property type="evidence" value="ECO:0000318"/>
    <property type="project" value="GO_Central"/>
</dbReference>
<dbReference type="InterPro" id="IPR017920">
    <property type="entry name" value="COMM"/>
</dbReference>
<dbReference type="InterPro" id="IPR047155">
    <property type="entry name" value="COMMD4/6/7/8"/>
</dbReference>
<dbReference type="PANTHER" id="PTHR16231">
    <property type="entry name" value="COMM DOMAIN-CONTAINING PROTEIN 4-8 FAMILY MEMBER"/>
    <property type="match status" value="1"/>
</dbReference>
<dbReference type="PANTHER" id="PTHR16231:SF5">
    <property type="entry name" value="COMM DOMAIN-CONTAINING PROTEIN 6"/>
    <property type="match status" value="1"/>
</dbReference>
<dbReference type="Pfam" id="PF07258">
    <property type="entry name" value="COMM_domain"/>
    <property type="match status" value="1"/>
</dbReference>
<dbReference type="PROSITE" id="PS51269">
    <property type="entry name" value="COMM"/>
    <property type="match status" value="1"/>
</dbReference>
<name>COMD6_HUMAN</name>
<feature type="chain" id="PRO_0000077398" description="COMM domain-containing protein 6">
    <location>
        <begin position="1"/>
        <end position="85"/>
    </location>
</feature>
<feature type="domain" description="COMM" evidence="1">
    <location>
        <begin position="18"/>
        <end position="85"/>
    </location>
</feature>
<feature type="modified residue" description="N-acetylmethionine" evidence="15">
    <location>
        <position position="1"/>
    </location>
</feature>
<feature type="splice variant" id="VSP_026593" description="In isoform 2." evidence="10">
    <original>Q</original>
    <variation>QPQLLATSSLLSAS</variation>
    <location>
        <position position="69"/>
    </location>
</feature>
<feature type="sequence variant" id="VAR_048813" description="In dbSNP:rs1063485.">
    <original>H</original>
    <variation>N</variation>
    <location>
        <position position="52"/>
    </location>
</feature>
<feature type="mutagenesis site" description="Does not abolish homodimerization and interaction with COMMD1. Does not abolish repression of TNF-induced NFKB1 activation. Abolishes repression of TNF-induced NFKB1 activation; when associated with A-41." evidence="3">
    <original>W</original>
    <variation>A</variation>
    <location>
        <position position="24"/>
    </location>
</feature>
<feature type="mutagenesis site" description="Does not abolish homodimerization and interaction with COMMD1. Does not abolish repression of TNF-induced NFKB1 activation. Abolishes repression of TNF-induced NFKB1 activation; when associated with A-24." evidence="3">
    <original>P</original>
    <variation>A</variation>
    <location>
        <position position="41"/>
    </location>
</feature>
<feature type="helix" evidence="16">
    <location>
        <begin position="12"/>
        <end position="15"/>
    </location>
</feature>
<feature type="strand" evidence="17">
    <location>
        <begin position="17"/>
        <end position="34"/>
    </location>
</feature>
<feature type="strand" evidence="17">
    <location>
        <begin position="40"/>
        <end position="50"/>
    </location>
</feature>
<feature type="helix" evidence="17">
    <location>
        <begin position="52"/>
        <end position="54"/>
    </location>
</feature>
<feature type="strand" evidence="17">
    <location>
        <begin position="56"/>
        <end position="64"/>
    </location>
</feature>
<feature type="helix" evidence="17">
    <location>
        <begin position="65"/>
        <end position="84"/>
    </location>
</feature>
<protein>
    <recommendedName>
        <fullName>COMM domain-containing protein 6</fullName>
    </recommendedName>
</protein>
<gene>
    <name type="primary">COMMD6</name>
    <name type="ORF">MSTP076</name>
</gene>
<reference key="1">
    <citation type="journal article" date="2005" name="J. Biol. Chem.">
        <title>COMMD proteins, a novel family of structural and functional homologs of MURR1.</title>
        <authorList>
            <person name="Burstein E."/>
            <person name="Hoberg J.E."/>
            <person name="Wilkinson A.S."/>
            <person name="Rumble J.M."/>
            <person name="Csomos R.A."/>
            <person name="Komarck C.M."/>
            <person name="Maine G.N."/>
            <person name="Wilkinson J.C."/>
            <person name="Mayo M.W."/>
            <person name="Duckett C.S."/>
        </authorList>
    </citation>
    <scope>NUCLEOTIDE SEQUENCE [MRNA] (ISOFORM 1)</scope>
    <scope>FUNCTION</scope>
    <scope>INTERACTION WITH COMMD1; RELA; RELB AND NFKB1</scope>
    <scope>TISSUE SPECIFICITY</scope>
</reference>
<reference key="2">
    <citation type="submission" date="1999-07" db="EMBL/GenBank/DDBJ databases">
        <authorList>
            <person name="Qin B.M."/>
            <person name="Sheng H."/>
            <person name="Liu Y.Q."/>
            <person name="Zhao B."/>
            <person name="Liu B."/>
            <person name="Wang X.Y."/>
            <person name="Zhang Q."/>
            <person name="Song L."/>
            <person name="Gao Y."/>
            <person name="Zhang C.L."/>
            <person name="Ye J."/>
            <person name="Ji X.J."/>
            <person name="Liu B.H."/>
            <person name="Lu H."/>
            <person name="Xu H.S."/>
            <person name="Chen J.Z."/>
            <person name="Cai M.Q."/>
            <person name="Zheng W.Y."/>
            <person name="Teng C.Y."/>
            <person name="Liu Q."/>
            <person name="Yu L.T."/>
            <person name="Lin J."/>
            <person name="Gong Q."/>
            <person name="Zhang A.M."/>
            <person name="Gao R.L."/>
            <person name="Hui R.T."/>
        </authorList>
    </citation>
    <scope>NUCLEOTIDE SEQUENCE [LARGE SCALE MRNA] (ISOFORM 1)</scope>
    <source>
        <tissue>Aorta</tissue>
    </source>
</reference>
<reference key="3">
    <citation type="journal article" date="2004" name="Nature">
        <title>The DNA sequence and analysis of human chromosome 13.</title>
        <authorList>
            <person name="Dunham A."/>
            <person name="Matthews L.H."/>
            <person name="Burton J."/>
            <person name="Ashurst J.L."/>
            <person name="Howe K.L."/>
            <person name="Ashcroft K.J."/>
            <person name="Beare D.M."/>
            <person name="Burford D.C."/>
            <person name="Hunt S.E."/>
            <person name="Griffiths-Jones S."/>
            <person name="Jones M.C."/>
            <person name="Keenan S.J."/>
            <person name="Oliver K."/>
            <person name="Scott C.E."/>
            <person name="Ainscough R."/>
            <person name="Almeida J.P."/>
            <person name="Ambrose K.D."/>
            <person name="Andrews D.T."/>
            <person name="Ashwell R.I.S."/>
            <person name="Babbage A.K."/>
            <person name="Bagguley C.L."/>
            <person name="Bailey J."/>
            <person name="Bannerjee R."/>
            <person name="Barlow K.F."/>
            <person name="Bates K."/>
            <person name="Beasley H."/>
            <person name="Bird C.P."/>
            <person name="Bray-Allen S."/>
            <person name="Brown A.J."/>
            <person name="Brown J.Y."/>
            <person name="Burrill W."/>
            <person name="Carder C."/>
            <person name="Carter N.P."/>
            <person name="Chapman J.C."/>
            <person name="Clamp M.E."/>
            <person name="Clark S.Y."/>
            <person name="Clarke G."/>
            <person name="Clee C.M."/>
            <person name="Clegg S.C."/>
            <person name="Cobley V."/>
            <person name="Collins J.E."/>
            <person name="Corby N."/>
            <person name="Coville G.J."/>
            <person name="Deloukas P."/>
            <person name="Dhami P."/>
            <person name="Dunham I."/>
            <person name="Dunn M."/>
            <person name="Earthrowl M.E."/>
            <person name="Ellington A.G."/>
            <person name="Faulkner L."/>
            <person name="Frankish A.G."/>
            <person name="Frankland J."/>
            <person name="French L."/>
            <person name="Garner P."/>
            <person name="Garnett J."/>
            <person name="Gilbert J.G.R."/>
            <person name="Gilson C.J."/>
            <person name="Ghori J."/>
            <person name="Grafham D.V."/>
            <person name="Gribble S.M."/>
            <person name="Griffiths C."/>
            <person name="Hall R.E."/>
            <person name="Hammond S."/>
            <person name="Harley J.L."/>
            <person name="Hart E.A."/>
            <person name="Heath P.D."/>
            <person name="Howden P.J."/>
            <person name="Huckle E.J."/>
            <person name="Hunt P.J."/>
            <person name="Hunt A.R."/>
            <person name="Johnson C."/>
            <person name="Johnson D."/>
            <person name="Kay M."/>
            <person name="Kimberley A.M."/>
            <person name="King A."/>
            <person name="Laird G.K."/>
            <person name="Langford C.J."/>
            <person name="Lawlor S."/>
            <person name="Leongamornlert D.A."/>
            <person name="Lloyd D.M."/>
            <person name="Lloyd C."/>
            <person name="Loveland J.E."/>
            <person name="Lovell J."/>
            <person name="Martin S."/>
            <person name="Mashreghi-Mohammadi M."/>
            <person name="McLaren S.J."/>
            <person name="McMurray A."/>
            <person name="Milne S."/>
            <person name="Moore M.J.F."/>
            <person name="Nickerson T."/>
            <person name="Palmer S.A."/>
            <person name="Pearce A.V."/>
            <person name="Peck A.I."/>
            <person name="Pelan S."/>
            <person name="Phillimore B."/>
            <person name="Porter K.M."/>
            <person name="Rice C.M."/>
            <person name="Searle S."/>
            <person name="Sehra H.K."/>
            <person name="Shownkeen R."/>
            <person name="Skuce C.D."/>
            <person name="Smith M."/>
            <person name="Steward C.A."/>
            <person name="Sycamore N."/>
            <person name="Tester J."/>
            <person name="Thomas D.W."/>
            <person name="Tracey A."/>
            <person name="Tromans A."/>
            <person name="Tubby B."/>
            <person name="Wall M."/>
            <person name="Wallis J.M."/>
            <person name="West A.P."/>
            <person name="Whitehead S.L."/>
            <person name="Willey D.L."/>
            <person name="Wilming L."/>
            <person name="Wray P.W."/>
            <person name="Wright M.W."/>
            <person name="Young L."/>
            <person name="Coulson A."/>
            <person name="Durbin R.M."/>
            <person name="Hubbard T."/>
            <person name="Sulston J.E."/>
            <person name="Beck S."/>
            <person name="Bentley D.R."/>
            <person name="Rogers J."/>
            <person name="Ross M.T."/>
        </authorList>
    </citation>
    <scope>NUCLEOTIDE SEQUENCE [LARGE SCALE GENOMIC DNA]</scope>
</reference>
<reference key="4">
    <citation type="journal article" date="2004" name="Genome Res.">
        <title>The status, quality, and expansion of the NIH full-length cDNA project: the Mammalian Gene Collection (MGC).</title>
        <authorList>
            <consortium name="The MGC Project Team"/>
        </authorList>
    </citation>
    <scope>NUCLEOTIDE SEQUENCE [LARGE SCALE MRNA] (ISOFORM 1)</scope>
    <source>
        <tissue>Brain</tissue>
    </source>
</reference>
<reference key="5">
    <citation type="journal article" date="2006" name="Biochem. J.">
        <title>Characterization of COMMD protein-protein interactions in NF-kappaB signalling.</title>
        <authorList>
            <person name="de Bie P."/>
            <person name="van de Sluis B."/>
            <person name="Burstein E."/>
            <person name="Duran K.J."/>
            <person name="Berger R."/>
            <person name="Duckett C.S."/>
            <person name="Wijmenga C."/>
            <person name="Klomp L.W."/>
        </authorList>
    </citation>
    <scope>FUNCTION</scope>
    <scope>INTERACTION WITH COMMD1</scope>
    <scope>SUBUNIT</scope>
    <scope>MUTAGENESIS OF TRP-24 AND PRO-41</scope>
    <scope>SUBCELLULAR LOCATION</scope>
    <scope>TISSUE SPECIFICITY</scope>
    <scope>ALTERNATIVE SPLICING (ISOFORM 2)</scope>
</reference>
<reference key="6">
    <citation type="journal article" date="2009" name="Anal. Chem.">
        <title>Lys-N and trypsin cover complementary parts of the phosphoproteome in a refined SCX-based approach.</title>
        <authorList>
            <person name="Gauci S."/>
            <person name="Helbig A.O."/>
            <person name="Slijper M."/>
            <person name="Krijgsveld J."/>
            <person name="Heck A.J."/>
            <person name="Mohammed S."/>
        </authorList>
    </citation>
    <scope>ACETYLATION [LARGE SCALE ANALYSIS] AT MET-1</scope>
    <scope>IDENTIFICATION BY MASS SPECTROMETRY [LARGE SCALE ANALYSIS]</scope>
</reference>
<reference key="7">
    <citation type="journal article" date="2011" name="BMC Syst. Biol.">
        <title>Initial characterization of the human central proteome.</title>
        <authorList>
            <person name="Burkard T.R."/>
            <person name="Planyavsky M."/>
            <person name="Kaupe I."/>
            <person name="Breitwieser F.P."/>
            <person name="Buerckstuemmer T."/>
            <person name="Bennett K.L."/>
            <person name="Superti-Furga G."/>
            <person name="Colinge J."/>
        </authorList>
    </citation>
    <scope>IDENTIFICATION BY MASS SPECTROMETRY [LARGE SCALE ANALYSIS]</scope>
</reference>
<reference key="8">
    <citation type="journal article" date="2011" name="J. Biol. Chem.">
        <title>COMMD1 (copper metabolism MURR1 domain-containing protein 1) regulates Cullin RING ligases by preventing CAND1 (Cullin-associated Nedd8-dissociated protein 1) binding.</title>
        <authorList>
            <person name="Mao X."/>
            <person name="Gluck N."/>
            <person name="Chen B."/>
            <person name="Starokadomskyy P."/>
            <person name="Li H."/>
            <person name="Maine G.N."/>
            <person name="Burstein E."/>
        </authorList>
    </citation>
    <scope>FUNCTION</scope>
    <scope>INTERACTION WITH CUL4A</scope>
    <scope>SUBCELLULAR LOCATION</scope>
</reference>
<reference key="9">
    <citation type="journal article" date="2013" name="Am. J. Physiol.">
        <title>Functional interaction of COMMD3 and COMMD9 with the epithelial sodium channel.</title>
        <authorList>
            <person name="Liu Y.F."/>
            <person name="Swart M."/>
            <person name="Ke Y."/>
            <person name="Ly K."/>
            <person name="McDonald F.J."/>
        </authorList>
    </citation>
    <scope>INTERACTION WITH SCNN1B</scope>
</reference>
<reference key="10">
    <citation type="journal article" date="2013" name="J. Clin. Invest.">
        <title>CCDC22 deficiency in humans blunts activation of proinflammatory NF-kappaB signaling.</title>
        <authorList>
            <person name="Starokadomskyy P."/>
            <person name="Gluck N."/>
            <person name="Li H."/>
            <person name="Chen B."/>
            <person name="Wallis M."/>
            <person name="Maine G.N."/>
            <person name="Mao X."/>
            <person name="Zaidi I.W."/>
            <person name="Hein M.Y."/>
            <person name="McDonald F.J."/>
            <person name="Lenzner S."/>
            <person name="Zecha A."/>
            <person name="Ropers H.H."/>
            <person name="Kuss A.W."/>
            <person name="McGaughran J."/>
            <person name="Gecz J."/>
            <person name="Burstein E."/>
        </authorList>
    </citation>
    <scope>INTERACTION WITH CCDC22</scope>
</reference>
<reference key="11">
    <citation type="journal article" date="2015" name="Mol. Biol. Cell">
        <title>COMMD1 is linked to the WASH complex and regulates endosomal trafficking of the copper transporter ATP7A.</title>
        <authorList>
            <person name="Phillips-Krawczak C.A."/>
            <person name="Singla A."/>
            <person name="Starokadomskyy P."/>
            <person name="Deng Z."/>
            <person name="Osborne D.G."/>
            <person name="Li H."/>
            <person name="Dick C.J."/>
            <person name="Gomez T.S."/>
            <person name="Koenecke M."/>
            <person name="Zhang J.S."/>
            <person name="Dai H."/>
            <person name="Sifuentes-Dominguez L.F."/>
            <person name="Geng L.N."/>
            <person name="Kaufmann S.H."/>
            <person name="Hein M.Y."/>
            <person name="Wallis M."/>
            <person name="McGaughran J."/>
            <person name="Gecz J."/>
            <person name="van de Sluis B."/>
            <person name="Billadeau D.D."/>
            <person name="Burstein E."/>
        </authorList>
    </citation>
    <scope>INTERACTION WITH CCDC93</scope>
</reference>
<reference evidence="12 13" key="12">
    <citation type="journal article" date="2023" name="Cell">
        <title>Structure of the endosomal commander complex linked to Ritscher-Schinzel syndrome.</title>
        <authorList>
            <person name="Healy M.D."/>
            <person name="McNally K.E."/>
            <person name="Butkovic R."/>
            <person name="Chilton M."/>
            <person name="Kato K."/>
            <person name="Sacharz J."/>
            <person name="McConville C."/>
            <person name="Moody E.R.R."/>
            <person name="Shaw S."/>
            <person name="Planelles-Herrero V.J."/>
            <person name="Yadav S.K.N."/>
            <person name="Ross J."/>
            <person name="Borucu U."/>
            <person name="Palmer C.S."/>
            <person name="Chen K.E."/>
            <person name="Croll T.I."/>
            <person name="Hall R.J."/>
            <person name="Caruana N.J."/>
            <person name="Ghai R."/>
            <person name="Nguyen T.H.D."/>
            <person name="Heesom K.J."/>
            <person name="Saitoh S."/>
            <person name="Berger I."/>
            <person name="Schaffitzel C."/>
            <person name="Williams T.A."/>
            <person name="Stroud D.A."/>
            <person name="Derivery E."/>
            <person name="Collins B.M."/>
            <person name="Cullen P.J."/>
        </authorList>
    </citation>
    <scope>STRUCTURE BY ELECTRON MICROSCOPY (3.12 ANGSTROMS) OF 9-85 OF THE CCC COMPLEX</scope>
    <scope>FUNCTION</scope>
    <scope>SUBUNIT</scope>
</reference>
<reference evidence="14" key="13">
    <citation type="journal article" date="2024" name="Nat. Struct. Mol. Biol.">
        <title>Structure and interactions of the endogenous human commander complex.</title>
        <authorList>
            <person name="Laulumaa S."/>
            <person name="Kumpula E.P."/>
            <person name="Huiskonen J.T."/>
            <person name="Varjosalo M."/>
        </authorList>
    </citation>
    <scope>STRUCTURE BY ELECTRON MICROSCOPY (2.90 ANGSTROMS) OF THE CCC COMPLEX</scope>
    <scope>FUNCTION</scope>
    <scope>SUBUNIT</scope>
</reference>
<comment type="function">
    <text evidence="2 3 8 9 11">Scaffold protein in the commander complex that is essential for endosomal recycling of transmembrane cargos; the commander complex is composed of the CCC subcomplex and the retriever subcomplex (PubMed:37172566, PubMed:38459129). May modulate activity of cullin-RING E3 ubiquitin ligase (CRL) complexes (PubMed:21778237). Down-regulates activation of NF-kappa-B (PubMed:15799966, PubMed:16573520). Inhibits TNF-induced NFKB1 activation (PubMed:15799966, PubMed:16573520).</text>
</comment>
<comment type="subunit">
    <text evidence="2 3 4 5 6 7 8 9">Component of the commander complex consisting of the CCC subcomplex and the retriever subcomplex (PubMed:37172566, PubMed:38459129, PubMed:25355947, PubMed:15799966). Component of the CCC (COMMD/CCDC22/CCDC93) subcomplex consisting of COMMD1, COMMD2, COMMD3, COMMD4, COMMD5, COMMD6, COMMD7, COMMD8, COMMD9, COMMD10, CCDC22 and CCDC93; within the complex forms a heterodimer with COMMD1 (PubMed:37172566, PubMed:38459129, PubMed:15799966, PubMed:23563313, PubMed:25355947). May form a homodimer with isoform 1 (PubMed:16573520). Interacts with RELA, RELB, NFKB1/p105 (PubMed:15799966, PubMed:16573520). Does not interact with NFKBIB (PubMed:15799966). Interacts with CCDC22, CCDC93, SCNN1B, CUL4A (PubMed:21778237, PubMed:23637203, PubMed:23563313, PubMed:25355947).</text>
</comment>
<comment type="interaction">
    <interactant intactId="EBI-1550081">
        <id>Q7Z4G1</id>
    </interactant>
    <interactant intactId="EBI-3943153">
        <id>O60826</id>
        <label>CCDC22</label>
    </interactant>
    <organismsDiffer>false</organismsDiffer>
    <experiments>15</experiments>
</comment>
<comment type="interaction">
    <interactant intactId="EBI-1550081">
        <id>Q7Z4G1</id>
    </interactant>
    <interactant intactId="EBI-1104769">
        <id>Q567U6</id>
        <label>CCDC93</label>
    </interactant>
    <organismsDiffer>false</organismsDiffer>
    <experiments>8</experiments>
</comment>
<comment type="interaction">
    <interactant intactId="EBI-1550081">
        <id>Q7Z4G1</id>
    </interactant>
    <interactant intactId="EBI-1550112">
        <id>Q8N668</id>
        <label>COMMD1</label>
    </interactant>
    <organismsDiffer>false</organismsDiffer>
    <experiments>28</experiments>
</comment>
<comment type="interaction">
    <interactant intactId="EBI-1550081">
        <id>Q7Z4G1</id>
    </interactant>
    <interactant intactId="EBI-1550510">
        <id>Q9P000</id>
        <label>COMMD9</label>
    </interactant>
    <organismsDiffer>false</organismsDiffer>
    <experiments>9</experiments>
</comment>
<comment type="interaction">
    <interactant intactId="EBI-1550081">
        <id>Q7Z4G1</id>
    </interactant>
    <interactant intactId="EBI-355106">
        <id>P17066</id>
        <label>HSPA6</label>
    </interactant>
    <organismsDiffer>false</organismsDiffer>
    <experiments>3</experiments>
</comment>
<comment type="subcellular location">
    <subcellularLocation>
        <location evidence="3 4">Nucleus</location>
    </subcellularLocation>
    <subcellularLocation>
        <location evidence="3">Cytoplasm</location>
    </subcellularLocation>
</comment>
<comment type="alternative products">
    <event type="alternative splicing"/>
    <isoform>
        <id>Q7Z4G1-1</id>
        <name>1</name>
        <sequence type="displayed"/>
    </isoform>
    <isoform>
        <id>Q7Z4G1-2</id>
        <name>2</name>
        <sequence type="described" ref="VSP_026593"/>
    </isoform>
</comment>
<comment type="tissue specificity">
    <text evidence="2 3">Ubiquitous. Expressed in brain, heart, skeletal muscle, lung, pancreas, liver, kidney, small intestine and placenta.</text>
</comment>
<comment type="similarity">
    <text evidence="10">Belongs to the COMM domain-containing protein 6 family.</text>
</comment>
<sequence length="85" mass="9638">MEASSEPPLDAKSDVTNQLVDFQWKLGMAVSSDTCRSLKYPYVAVMLKVADHSGQVKTKCFEMTIPQFQNFYRQFKEIAAVIETV</sequence>
<accession>Q7Z4G1</accession>
<accession>A6NF28</accession>
<accession>B7ZLN0</accession>
<accession>Q5TBK4</accession>